<gene>
    <name type="ORF">H7R</name>
</gene>
<proteinExistence type="evidence at transcript level"/>
<name>H7_VARV</name>
<accession>P0DON8</accession>
<accession>P33063</accession>
<feature type="chain" id="PRO_0000448198" description="Late protein H7">
    <location>
        <begin position="1"/>
        <end position="146"/>
    </location>
</feature>
<feature type="transmembrane region" description="Helical" evidence="2">
    <location>
        <begin position="10"/>
        <end position="32"/>
    </location>
</feature>
<organism>
    <name type="scientific">Variola virus</name>
    <dbReference type="NCBI Taxonomy" id="10255"/>
    <lineage>
        <taxon>Viruses</taxon>
        <taxon>Varidnaviria</taxon>
        <taxon>Bamfordvirae</taxon>
        <taxon>Nucleocytoviricota</taxon>
        <taxon>Pokkesviricetes</taxon>
        <taxon>Chitovirales</taxon>
        <taxon>Poxviridae</taxon>
        <taxon>Chordopoxvirinae</taxon>
        <taxon>Orthopoxvirus</taxon>
    </lineage>
</organism>
<keyword id="KW-0426">Late protein</keyword>
<keyword id="KW-0472">Membrane</keyword>
<keyword id="KW-0812">Transmembrane</keyword>
<keyword id="KW-1133">Transmembrane helix</keyword>
<reference key="1">
    <citation type="journal article" date="1993" name="Nature">
        <title>Potential virulence determinants in terminal regions of variola smallpox virus genome.</title>
        <authorList>
            <person name="Massung R.F."/>
            <person name="Esposito J.J."/>
            <person name="Liu L.I."/>
            <person name="Qi J."/>
            <person name="Utterback T.R."/>
            <person name="Knight J.C."/>
            <person name="Aubin L."/>
            <person name="Yuran T.E."/>
            <person name="Parsons J.M."/>
            <person name="Loparev V.N."/>
            <person name="Selivanov N.A."/>
            <person name="Cavallaro K.F."/>
            <person name="Kerlavage A.R."/>
            <person name="Mahy B.W.J."/>
            <person name="Venter J.C."/>
        </authorList>
    </citation>
    <scope>NUCLEOTIDE SEQUENCE [GENOMIC DNA]</scope>
    <source>
        <strain>Bangladesh-1975</strain>
    </source>
</reference>
<comment type="function">
    <text evidence="1">Contributes to the formation of crescents and immature virions (IV).</text>
</comment>
<comment type="subcellular location">
    <subcellularLocation>
        <location evidence="3">Membrane</location>
        <topology evidence="3">Single-pass membrane protein</topology>
    </subcellularLocation>
    <text evidence="1">Probably transitorily part of the membrane of crescents during immature virions formation. Not incorporated into virions. Probably synthesized, but not retained in viral factories (By similarity).</text>
</comment>
<comment type="induction">
    <text>Expressed in the late phase of the viral replicative cycle.</text>
</comment>
<comment type="similarity">
    <text evidence="3">Belongs to the chordopoxvirinae H7 family.</text>
</comment>
<evidence type="ECO:0000250" key="1"/>
<evidence type="ECO:0000255" key="2"/>
<evidence type="ECO:0000305" key="3"/>
<organismHost>
    <name type="scientific">Homo sapiens</name>
    <name type="common">Human</name>
    <dbReference type="NCBI Taxonomy" id="9606"/>
</organismHost>
<sequence length="146" mass="16900">MEMDKRMKSLAMTAFFGELTTLDIMALIMSIFKRHPNNTIFSVDKDGQFMIDFEYDTYKASQYLDLPLTPISGDECKTHASSIAKQLACVDIIKEDISEYIKTTPRLKRFIKKYRNRSDTRISQDTEKLKIALAKGIDYEYIKDAC</sequence>
<dbReference type="EMBL" id="L22579">
    <property type="protein sequence ID" value="AAA60838.1"/>
    <property type="molecule type" value="Genomic_DNA"/>
</dbReference>
<dbReference type="PIR" id="T28528">
    <property type="entry name" value="T28528"/>
</dbReference>
<dbReference type="SMR" id="P0DON8"/>
<dbReference type="KEGG" id="vg:1486445"/>
<dbReference type="Proteomes" id="UP000119805">
    <property type="component" value="Segment"/>
</dbReference>
<dbReference type="GO" id="GO:0016020">
    <property type="term" value="C:membrane"/>
    <property type="evidence" value="ECO:0007669"/>
    <property type="project" value="UniProtKB-SubCell"/>
</dbReference>
<dbReference type="InterPro" id="IPR006872">
    <property type="entry name" value="Poxvirus_H7"/>
</dbReference>
<dbReference type="Pfam" id="PF04787">
    <property type="entry name" value="Pox_H7"/>
    <property type="match status" value="1"/>
</dbReference>
<protein>
    <recommendedName>
        <fullName>Late protein H7</fullName>
    </recommendedName>
</protein>